<feature type="initiator methionine" description="Removed" evidence="1 3">
    <location>
        <position position="1"/>
    </location>
</feature>
<feature type="chain" id="PRO_0000174212" description="Small ribosomal subunit protein eS7A">
    <location>
        <begin position="2"/>
        <end position="190"/>
    </location>
</feature>
<feature type="modified residue" description="N-acetylserine" evidence="1 3">
    <location>
        <position position="2"/>
    </location>
</feature>
<feature type="cross-link" description="Glycyl lysine isopeptide (Lys-Gly) (interchain with G-Cter in ubiquitin)" evidence="6">
    <location>
        <position position="83"/>
    </location>
</feature>
<feature type="cross-link" description="Glycyl lysine isopeptide (Lys-Gly) (interchain with G-Cter in ubiquitin)" evidence="6">
    <location>
        <position position="84"/>
    </location>
</feature>
<feature type="cross-link" description="Glycyl lysine isopeptide (Lys-Gly) (interchain with G-Cter in ubiquitin)" evidence="12">
    <location>
        <position position="124"/>
    </location>
</feature>
<feature type="sequence conflict" description="In Ref. 4; AA sequence." evidence="9" ref="4">
    <original>F</original>
    <variation>E</variation>
    <location>
        <position position="24"/>
    </location>
</feature>
<feature type="helix" evidence="15">
    <location>
        <begin position="5"/>
        <end position="8"/>
    </location>
</feature>
<feature type="strand" evidence="14">
    <location>
        <begin position="9"/>
        <end position="11"/>
    </location>
</feature>
<feature type="helix" evidence="15">
    <location>
        <begin position="15"/>
        <end position="30"/>
    </location>
</feature>
<feature type="helix" evidence="15">
    <location>
        <begin position="34"/>
        <end position="37"/>
    </location>
</feature>
<feature type="strand" evidence="13">
    <location>
        <begin position="38"/>
        <end position="40"/>
    </location>
</feature>
<feature type="strand" evidence="15">
    <location>
        <begin position="45"/>
        <end position="50"/>
    </location>
</feature>
<feature type="helix" evidence="15">
    <location>
        <begin position="52"/>
        <end position="54"/>
    </location>
</feature>
<feature type="strand" evidence="15">
    <location>
        <begin position="56"/>
        <end position="63"/>
    </location>
</feature>
<feature type="helix" evidence="15">
    <location>
        <begin position="64"/>
        <end position="66"/>
    </location>
</feature>
<feature type="helix" evidence="15">
    <location>
        <begin position="67"/>
        <end position="70"/>
    </location>
</feature>
<feature type="turn" evidence="15">
    <location>
        <begin position="71"/>
        <end position="73"/>
    </location>
</feature>
<feature type="helix" evidence="15">
    <location>
        <begin position="74"/>
        <end position="84"/>
    </location>
</feature>
<feature type="strand" evidence="15">
    <location>
        <begin position="85"/>
        <end position="87"/>
    </location>
</feature>
<feature type="strand" evidence="15">
    <location>
        <begin position="89"/>
        <end position="95"/>
    </location>
</feature>
<feature type="strand" evidence="15">
    <location>
        <begin position="104"/>
        <end position="106"/>
    </location>
</feature>
<feature type="helix" evidence="15">
    <location>
        <begin position="114"/>
        <end position="116"/>
    </location>
</feature>
<feature type="helix" evidence="15">
    <location>
        <begin position="118"/>
        <end position="129"/>
    </location>
</feature>
<feature type="turn" evidence="15">
    <location>
        <begin position="130"/>
        <end position="132"/>
    </location>
</feature>
<feature type="strand" evidence="15">
    <location>
        <begin position="135"/>
        <end position="142"/>
    </location>
</feature>
<feature type="strand" evidence="13">
    <location>
        <begin position="144"/>
        <end position="146"/>
    </location>
</feature>
<feature type="strand" evidence="15">
    <location>
        <begin position="148"/>
        <end position="154"/>
    </location>
</feature>
<feature type="strand" evidence="15">
    <location>
        <begin position="156"/>
        <end position="158"/>
    </location>
</feature>
<feature type="helix" evidence="15">
    <location>
        <begin position="159"/>
        <end position="161"/>
    </location>
</feature>
<feature type="turn" evidence="15">
    <location>
        <begin position="162"/>
        <end position="165"/>
    </location>
</feature>
<feature type="helix" evidence="15">
    <location>
        <begin position="166"/>
        <end position="177"/>
    </location>
</feature>
<feature type="strand" evidence="15">
    <location>
        <begin position="181"/>
        <end position="184"/>
    </location>
</feature>
<name>RS7A_YEAST</name>
<evidence type="ECO:0000269" key="1">
    <source>
    </source>
</evidence>
<evidence type="ECO:0000269" key="2">
    <source>
    </source>
</evidence>
<evidence type="ECO:0000269" key="3">
    <source>
    </source>
</evidence>
<evidence type="ECO:0000269" key="4">
    <source>
    </source>
</evidence>
<evidence type="ECO:0000269" key="5">
    <source>
    </source>
</evidence>
<evidence type="ECO:0000269" key="6">
    <source>
    </source>
</evidence>
<evidence type="ECO:0000303" key="7">
    <source>
    </source>
</evidence>
<evidence type="ECO:0000303" key="8">
    <source>
    </source>
</evidence>
<evidence type="ECO:0000305" key="9"/>
<evidence type="ECO:0000305" key="10">
    <source>
    </source>
</evidence>
<evidence type="ECO:0000305" key="11">
    <source>
    </source>
</evidence>
<evidence type="ECO:0007744" key="12">
    <source>
    </source>
</evidence>
<evidence type="ECO:0007829" key="13">
    <source>
        <dbReference type="PDB" id="6ZVI"/>
    </source>
</evidence>
<evidence type="ECO:0007829" key="14">
    <source>
        <dbReference type="PDB" id="8C00"/>
    </source>
</evidence>
<evidence type="ECO:0007829" key="15">
    <source>
        <dbReference type="PDB" id="8C01"/>
    </source>
</evidence>
<organism>
    <name type="scientific">Saccharomyces cerevisiae (strain ATCC 204508 / S288c)</name>
    <name type="common">Baker's yeast</name>
    <dbReference type="NCBI Taxonomy" id="559292"/>
    <lineage>
        <taxon>Eukaryota</taxon>
        <taxon>Fungi</taxon>
        <taxon>Dikarya</taxon>
        <taxon>Ascomycota</taxon>
        <taxon>Saccharomycotina</taxon>
        <taxon>Saccharomycetes</taxon>
        <taxon>Saccharomycetales</taxon>
        <taxon>Saccharomycetaceae</taxon>
        <taxon>Saccharomyces</taxon>
    </lineage>
</organism>
<sequence>MSAPQAKILSQAPTELELQVAQAFVELENSSPELKAELRPLQFKSIREIDVAGGKKALAIFVPVPSLAGFHKVQTKLTRELEKKFQDRHVIFLAERRILPKPSRTSRQVQKRPRSRTLTAVHDKILEDLVFPTEIVGKRVRYLVGGNKIQKVLLDSKDVQQIDYKLESFQAVYNKLTGKQIVFEIPSETH</sequence>
<keyword id="KW-0002">3D-structure</keyword>
<keyword id="KW-0007">Acetylation</keyword>
<keyword id="KW-0963">Cytoplasm</keyword>
<keyword id="KW-0903">Direct protein sequencing</keyword>
<keyword id="KW-1017">Isopeptide bond</keyword>
<keyword id="KW-0539">Nucleus</keyword>
<keyword id="KW-1185">Reference proteome</keyword>
<keyword id="KW-0687">Ribonucleoprotein</keyword>
<keyword id="KW-0689">Ribosomal protein</keyword>
<keyword id="KW-0690">Ribosome biogenesis</keyword>
<keyword id="KW-0698">rRNA processing</keyword>
<keyword id="KW-0832">Ubl conjugation</keyword>
<comment type="function">
    <text evidence="4 10">Component of the ribosome, a large ribonucleoprotein complex responsible for the synthesis of proteins in the cell. The small ribosomal subunit (SSU) binds messenger RNAs (mRNAs) and translates the encoded message by selecting cognate aminoacyl-transfer RNA (tRNA) molecules. The large subunit (LSU) contains the ribosomal catalytic site termed the peptidyl transferase center (PTC), which catalyzes the formation of peptide bonds, thereby polymerizing the amino acids delivered by tRNAs into a polypeptide chain. The nascent polypeptides leave the ribosome through a tunnel in the LSU and interact with protein factors that function in enzymatic processing, targeting, and the membrane insertion of nascent chains at the exit of the ribosomal tunnel (PubMed:22096102). eS7 is involved in nucleolar processing of pre-18S ribosomal RNA and ribosome assembly (PubMed:15590835).</text>
</comment>
<comment type="subunit">
    <text evidence="4 5 11">Component of the small ribosomal subunit (SSU). Mature yeast ribosomes consist of a small (40S) and a large (60S) subunit. The 40S small subunit contains 1 molecule of ribosomal RNA (18S rRNA) and 33 different proteins (encoded by 57 genes). The large 60S subunit contains 3 rRNA molecules (25S, 5.8S and 5S rRNA) and 46 different proteins (encoded by 81 genes) (PubMed:22096102, PubMed:9559554). Interacts with snoRNA U3. uS11 interacts with MPP10. Component of the ribosomal small subunit (SSU) processome composed of at least 40 protein subunits and snoRNA U3 (PubMed:15590835).</text>
</comment>
<comment type="subcellular location">
    <subcellularLocation>
        <location evidence="5">Cytoplasm</location>
    </subcellularLocation>
    <subcellularLocation>
        <location evidence="4">Nucleus</location>
        <location evidence="4">Nucleolus</location>
    </subcellularLocation>
</comment>
<comment type="PTM">
    <text evidence="1 3">N-terminally acetylated by acetyltransferase NatA.</text>
</comment>
<comment type="PTM">
    <text evidence="6">Ubiquitinated at Lys-83 and Lys-84 in response to stalled ribosomes, leading to activation of the No-Go Decay (NGD) pathway: first monoubiquitinated by MOT2/NOT4, followed by formation by HEL2 of 'Lys-63'-linked polyubiquitin chains on monoubiquitin.</text>
</comment>
<comment type="miscellaneous">
    <text evidence="2">Present with 41000 molecules/cell in log phase SD medium.</text>
</comment>
<comment type="miscellaneous">
    <text evidence="9">There are 2 genes for eS7 in yeast.</text>
</comment>
<comment type="similarity">
    <text evidence="9">Belongs to the eukaryotic ribosomal protein eS7 family.</text>
</comment>
<accession>P26786</accession>
<accession>D6W2F7</accession>
<accession>Q08502</accession>
<dbReference type="EMBL" id="X94335">
    <property type="protein sequence ID" value="CAA64018.1"/>
    <property type="status" value="ALT_SEQ"/>
    <property type="molecule type" value="Genomic_DNA"/>
</dbReference>
<dbReference type="EMBL" id="Z75004">
    <property type="protein sequence ID" value="CAA99293.1"/>
    <property type="molecule type" value="Genomic_DNA"/>
</dbReference>
<dbReference type="EMBL" id="BK006948">
    <property type="protein sequence ID" value="DAA10873.1"/>
    <property type="molecule type" value="Genomic_DNA"/>
</dbReference>
<dbReference type="PIR" id="S66981">
    <property type="entry name" value="S66981"/>
</dbReference>
<dbReference type="RefSeq" id="NP_014739.1">
    <property type="nucleotide sequence ID" value="NM_001183515.1"/>
</dbReference>
<dbReference type="PDB" id="3J6X">
    <property type="method" value="EM"/>
    <property type="resolution" value="6.10 A"/>
    <property type="chains" value="S7=1-190"/>
</dbReference>
<dbReference type="PDB" id="3J6Y">
    <property type="method" value="EM"/>
    <property type="resolution" value="6.10 A"/>
    <property type="chains" value="S7=1-190"/>
</dbReference>
<dbReference type="PDB" id="3J77">
    <property type="method" value="EM"/>
    <property type="resolution" value="6.20 A"/>
    <property type="chains" value="S7=1-190"/>
</dbReference>
<dbReference type="PDB" id="3J78">
    <property type="method" value="EM"/>
    <property type="resolution" value="6.30 A"/>
    <property type="chains" value="S7=1-190"/>
</dbReference>
<dbReference type="PDB" id="4U3M">
    <property type="method" value="X-ray"/>
    <property type="resolution" value="3.00 A"/>
    <property type="chains" value="S7/s7=2-190"/>
</dbReference>
<dbReference type="PDB" id="4U3N">
    <property type="method" value="X-ray"/>
    <property type="resolution" value="3.20 A"/>
    <property type="chains" value="S7/s7=2-190"/>
</dbReference>
<dbReference type="PDB" id="4U3U">
    <property type="method" value="X-ray"/>
    <property type="resolution" value="2.90 A"/>
    <property type="chains" value="S7/s7=2-190"/>
</dbReference>
<dbReference type="PDB" id="4U4N">
    <property type="method" value="X-ray"/>
    <property type="resolution" value="3.10 A"/>
    <property type="chains" value="S7/s7=2-190"/>
</dbReference>
<dbReference type="PDB" id="4U4O">
    <property type="method" value="X-ray"/>
    <property type="resolution" value="3.60 A"/>
    <property type="chains" value="S7/s7=2-190"/>
</dbReference>
<dbReference type="PDB" id="4U4Q">
    <property type="method" value="X-ray"/>
    <property type="resolution" value="3.00 A"/>
    <property type="chains" value="S7/s7=2-190"/>
</dbReference>
<dbReference type="PDB" id="4U4R">
    <property type="method" value="X-ray"/>
    <property type="resolution" value="2.80 A"/>
    <property type="chains" value="S7/s7=2-190"/>
</dbReference>
<dbReference type="PDB" id="4U4U">
    <property type="method" value="X-ray"/>
    <property type="resolution" value="3.00 A"/>
    <property type="chains" value="S7/s7=2-190"/>
</dbReference>
<dbReference type="PDB" id="4U4Y">
    <property type="method" value="X-ray"/>
    <property type="resolution" value="3.20 A"/>
    <property type="chains" value="S7/s7=2-190"/>
</dbReference>
<dbReference type="PDB" id="4U4Z">
    <property type="method" value="X-ray"/>
    <property type="resolution" value="3.10 A"/>
    <property type="chains" value="S7/s7=2-190"/>
</dbReference>
<dbReference type="PDB" id="4U50">
    <property type="method" value="X-ray"/>
    <property type="resolution" value="3.20 A"/>
    <property type="chains" value="S7/s7=2-190"/>
</dbReference>
<dbReference type="PDB" id="4U51">
    <property type="method" value="X-ray"/>
    <property type="resolution" value="3.20 A"/>
    <property type="chains" value="S7/s7=2-190"/>
</dbReference>
<dbReference type="PDB" id="4U52">
    <property type="method" value="X-ray"/>
    <property type="resolution" value="3.00 A"/>
    <property type="chains" value="S7/s7=2-190"/>
</dbReference>
<dbReference type="PDB" id="4U53">
    <property type="method" value="X-ray"/>
    <property type="resolution" value="3.30 A"/>
    <property type="chains" value="S7/s7=2-190"/>
</dbReference>
<dbReference type="PDB" id="4U55">
    <property type="method" value="X-ray"/>
    <property type="resolution" value="3.20 A"/>
    <property type="chains" value="S7/s7=2-190"/>
</dbReference>
<dbReference type="PDB" id="4U56">
    <property type="method" value="X-ray"/>
    <property type="resolution" value="3.45 A"/>
    <property type="chains" value="S7/s7=2-190"/>
</dbReference>
<dbReference type="PDB" id="4U6F">
    <property type="method" value="X-ray"/>
    <property type="resolution" value="3.10 A"/>
    <property type="chains" value="S7/s7=2-190"/>
</dbReference>
<dbReference type="PDB" id="4V88">
    <property type="method" value="X-ray"/>
    <property type="resolution" value="3.00 A"/>
    <property type="chains" value="AH/CH=1-190"/>
</dbReference>
<dbReference type="PDB" id="4V8Y">
    <property type="method" value="EM"/>
    <property type="resolution" value="4.30 A"/>
    <property type="chains" value="AH=1-190"/>
</dbReference>
<dbReference type="PDB" id="4V8Z">
    <property type="method" value="EM"/>
    <property type="resolution" value="6.60 A"/>
    <property type="chains" value="AH=1-190"/>
</dbReference>
<dbReference type="PDB" id="4V92">
    <property type="method" value="EM"/>
    <property type="resolution" value="3.70 A"/>
    <property type="chains" value="H=4-187"/>
</dbReference>
<dbReference type="PDB" id="5DAT">
    <property type="method" value="X-ray"/>
    <property type="resolution" value="3.15 A"/>
    <property type="chains" value="S7/s7=2-190"/>
</dbReference>
<dbReference type="PDB" id="5DC3">
    <property type="method" value="X-ray"/>
    <property type="resolution" value="3.25 A"/>
    <property type="chains" value="S7/s7=2-190"/>
</dbReference>
<dbReference type="PDB" id="5DGE">
    <property type="method" value="X-ray"/>
    <property type="resolution" value="3.45 A"/>
    <property type="chains" value="S7/s7=2-190"/>
</dbReference>
<dbReference type="PDB" id="5DGF">
    <property type="method" value="X-ray"/>
    <property type="resolution" value="3.30 A"/>
    <property type="chains" value="S7/s7=2-190"/>
</dbReference>
<dbReference type="PDB" id="5DGV">
    <property type="method" value="X-ray"/>
    <property type="resolution" value="3.10 A"/>
    <property type="chains" value="S7/s7=2-190"/>
</dbReference>
<dbReference type="PDB" id="5FCI">
    <property type="method" value="X-ray"/>
    <property type="resolution" value="3.40 A"/>
    <property type="chains" value="S7/s7=2-190"/>
</dbReference>
<dbReference type="PDB" id="5FCJ">
    <property type="method" value="X-ray"/>
    <property type="resolution" value="3.10 A"/>
    <property type="chains" value="S7/s7=2-190"/>
</dbReference>
<dbReference type="PDB" id="5I4L">
    <property type="method" value="X-ray"/>
    <property type="resolution" value="3.10 A"/>
    <property type="chains" value="S7/s7=2-187"/>
</dbReference>
<dbReference type="PDB" id="5JUO">
    <property type="method" value="EM"/>
    <property type="resolution" value="4.00 A"/>
    <property type="chains" value="EB=1-190"/>
</dbReference>
<dbReference type="PDB" id="5JUP">
    <property type="method" value="EM"/>
    <property type="resolution" value="3.50 A"/>
    <property type="chains" value="EB=1-190"/>
</dbReference>
<dbReference type="PDB" id="5JUS">
    <property type="method" value="EM"/>
    <property type="resolution" value="4.20 A"/>
    <property type="chains" value="EB=1-190"/>
</dbReference>
<dbReference type="PDB" id="5JUT">
    <property type="method" value="EM"/>
    <property type="resolution" value="4.00 A"/>
    <property type="chains" value="EB=1-190"/>
</dbReference>
<dbReference type="PDB" id="5JUU">
    <property type="method" value="EM"/>
    <property type="resolution" value="4.00 A"/>
    <property type="chains" value="EB=1-190"/>
</dbReference>
<dbReference type="PDB" id="5LL6">
    <property type="method" value="EM"/>
    <property type="resolution" value="3.90 A"/>
    <property type="chains" value="U=1-190"/>
</dbReference>
<dbReference type="PDB" id="5LYB">
    <property type="method" value="X-ray"/>
    <property type="resolution" value="3.25 A"/>
    <property type="chains" value="S7/s7=2-187"/>
</dbReference>
<dbReference type="PDB" id="5M1J">
    <property type="method" value="EM"/>
    <property type="resolution" value="3.30 A"/>
    <property type="chains" value="H2=4-187"/>
</dbReference>
<dbReference type="PDB" id="5MC6">
    <property type="method" value="EM"/>
    <property type="resolution" value="3.80 A"/>
    <property type="chains" value="U=1-190"/>
</dbReference>
<dbReference type="PDB" id="5MEI">
    <property type="method" value="X-ray"/>
    <property type="resolution" value="3.50 A"/>
    <property type="chains" value="I/s7=2-187"/>
</dbReference>
<dbReference type="PDB" id="5NDG">
    <property type="method" value="X-ray"/>
    <property type="resolution" value="3.70 A"/>
    <property type="chains" value="S7/s7=3-187"/>
</dbReference>
<dbReference type="PDB" id="5NDV">
    <property type="method" value="X-ray"/>
    <property type="resolution" value="3.30 A"/>
    <property type="chains" value="S7/s7=2-187"/>
</dbReference>
<dbReference type="PDB" id="5NDW">
    <property type="method" value="X-ray"/>
    <property type="resolution" value="3.70 A"/>
    <property type="chains" value="S7/s7=4-187"/>
</dbReference>
<dbReference type="PDB" id="5OBM">
    <property type="method" value="X-ray"/>
    <property type="resolution" value="3.40 A"/>
    <property type="chains" value="S7/s7=2-187"/>
</dbReference>
<dbReference type="PDB" id="5ON6">
    <property type="method" value="X-ray"/>
    <property type="resolution" value="3.10 A"/>
    <property type="chains" value="I/s7=2-187"/>
</dbReference>
<dbReference type="PDB" id="5TBW">
    <property type="method" value="X-ray"/>
    <property type="resolution" value="3.00 A"/>
    <property type="chains" value="I/s7=2-187"/>
</dbReference>
<dbReference type="PDB" id="5TGA">
    <property type="method" value="X-ray"/>
    <property type="resolution" value="3.30 A"/>
    <property type="chains" value="S7/s7=2-187"/>
</dbReference>
<dbReference type="PDB" id="5TGM">
    <property type="method" value="X-ray"/>
    <property type="resolution" value="3.50 A"/>
    <property type="chains" value="S7/s7=2-187"/>
</dbReference>
<dbReference type="PDB" id="5TZS">
    <property type="method" value="EM"/>
    <property type="resolution" value="5.10 A"/>
    <property type="chains" value="7=1-190"/>
</dbReference>
<dbReference type="PDB" id="5WLC">
    <property type="method" value="EM"/>
    <property type="resolution" value="3.80 A"/>
    <property type="chains" value="L7=1-190"/>
</dbReference>
<dbReference type="PDB" id="5WYJ">
    <property type="method" value="EM"/>
    <property type="resolution" value="8.70 A"/>
    <property type="chains" value="SI=1-190"/>
</dbReference>
<dbReference type="PDB" id="5WYK">
    <property type="method" value="EM"/>
    <property type="resolution" value="4.50 A"/>
    <property type="chains" value="SI=1-190"/>
</dbReference>
<dbReference type="PDB" id="6EML">
    <property type="method" value="EM"/>
    <property type="resolution" value="3.60 A"/>
    <property type="chains" value="U=1-190"/>
</dbReference>
<dbReference type="PDB" id="6FAI">
    <property type="method" value="EM"/>
    <property type="resolution" value="3.40 A"/>
    <property type="chains" value="H=1-190"/>
</dbReference>
<dbReference type="PDB" id="6GQ1">
    <property type="method" value="EM"/>
    <property type="resolution" value="4.40 A"/>
    <property type="chains" value="x=4-187"/>
</dbReference>
<dbReference type="PDB" id="6GQB">
    <property type="method" value="EM"/>
    <property type="resolution" value="3.90 A"/>
    <property type="chains" value="x=4-187"/>
</dbReference>
<dbReference type="PDB" id="6GQV">
    <property type="method" value="EM"/>
    <property type="resolution" value="4.00 A"/>
    <property type="chains" value="x=4-187"/>
</dbReference>
<dbReference type="PDB" id="6HHQ">
    <property type="method" value="X-ray"/>
    <property type="resolution" value="3.10 A"/>
    <property type="chains" value="I/s7=1-190"/>
</dbReference>
<dbReference type="PDB" id="6I7O">
    <property type="method" value="EM"/>
    <property type="resolution" value="5.30 A"/>
    <property type="chains" value="U/Ub=3-187"/>
</dbReference>
<dbReference type="PDB" id="6KE6">
    <property type="method" value="EM"/>
    <property type="resolution" value="3.40 A"/>
    <property type="chains" value="SI=1-190"/>
</dbReference>
<dbReference type="PDB" id="6LQP">
    <property type="method" value="EM"/>
    <property type="resolution" value="3.20 A"/>
    <property type="chains" value="SI=1-190"/>
</dbReference>
<dbReference type="PDB" id="6LQQ">
    <property type="method" value="EM"/>
    <property type="resolution" value="4.10 A"/>
    <property type="chains" value="SI=1-190"/>
</dbReference>
<dbReference type="PDB" id="6LQR">
    <property type="method" value="EM"/>
    <property type="resolution" value="8.60 A"/>
    <property type="chains" value="SI=1-190"/>
</dbReference>
<dbReference type="PDB" id="6LQS">
    <property type="method" value="EM"/>
    <property type="resolution" value="3.80 A"/>
    <property type="chains" value="SI=1-190"/>
</dbReference>
<dbReference type="PDB" id="6LQT">
    <property type="method" value="EM"/>
    <property type="resolution" value="4.90 A"/>
    <property type="chains" value="SI=1-190"/>
</dbReference>
<dbReference type="PDB" id="6LQU">
    <property type="method" value="EM"/>
    <property type="resolution" value="3.70 A"/>
    <property type="chains" value="SI=1-190"/>
</dbReference>
<dbReference type="PDB" id="6Q8Y">
    <property type="method" value="EM"/>
    <property type="resolution" value="3.10 A"/>
    <property type="chains" value="U=4-187"/>
</dbReference>
<dbReference type="PDB" id="6RBD">
    <property type="method" value="EM"/>
    <property type="resolution" value="3.47 A"/>
    <property type="chains" value="H=1-190"/>
</dbReference>
<dbReference type="PDB" id="6RBE">
    <property type="method" value="EM"/>
    <property type="resolution" value="3.80 A"/>
    <property type="chains" value="H=1-190"/>
</dbReference>
<dbReference type="PDB" id="6S47">
    <property type="method" value="EM"/>
    <property type="resolution" value="3.28 A"/>
    <property type="chains" value="BI=2-190"/>
</dbReference>
<dbReference type="PDB" id="6SNT">
    <property type="method" value="EM"/>
    <property type="resolution" value="2.80 A"/>
    <property type="chains" value="H=1-190"/>
</dbReference>
<dbReference type="PDB" id="6SV4">
    <property type="method" value="EM"/>
    <property type="resolution" value="3.30 A"/>
    <property type="chains" value="U/Ub/Uc=1-190"/>
</dbReference>
<dbReference type="PDB" id="6T4Q">
    <property type="method" value="EM"/>
    <property type="resolution" value="2.60 A"/>
    <property type="chains" value="SH=4-187"/>
</dbReference>
<dbReference type="PDB" id="6T7I">
    <property type="method" value="EM"/>
    <property type="resolution" value="3.20 A"/>
    <property type="chains" value="SH=1-190"/>
</dbReference>
<dbReference type="PDB" id="6T7T">
    <property type="method" value="EM"/>
    <property type="resolution" value="3.10 A"/>
    <property type="chains" value="SH=1-190"/>
</dbReference>
<dbReference type="PDB" id="6T83">
    <property type="method" value="EM"/>
    <property type="resolution" value="4.00 A"/>
    <property type="chains" value="Hb/i=1-190"/>
</dbReference>
<dbReference type="PDB" id="6TB3">
    <property type="method" value="EM"/>
    <property type="resolution" value="2.80 A"/>
    <property type="chains" value="U=4-187"/>
</dbReference>
<dbReference type="PDB" id="6TNU">
    <property type="method" value="EM"/>
    <property type="resolution" value="3.10 A"/>
    <property type="chains" value="U=4-187"/>
</dbReference>
<dbReference type="PDB" id="6WDR">
    <property type="method" value="EM"/>
    <property type="resolution" value="3.70 A"/>
    <property type="chains" value="H=4-187"/>
</dbReference>
<dbReference type="PDB" id="6WOO">
    <property type="method" value="EM"/>
    <property type="resolution" value="2.90 A"/>
    <property type="chains" value="HH=4-187"/>
</dbReference>
<dbReference type="PDB" id="6XIQ">
    <property type="method" value="EM"/>
    <property type="resolution" value="4.20 A"/>
    <property type="chains" value="x=1-190"/>
</dbReference>
<dbReference type="PDB" id="6XIR">
    <property type="method" value="EM"/>
    <property type="resolution" value="3.20 A"/>
    <property type="chains" value="x=1-190"/>
</dbReference>
<dbReference type="PDB" id="6Y7C">
    <property type="method" value="EM"/>
    <property type="resolution" value="3.80 A"/>
    <property type="chains" value="H=1-190"/>
</dbReference>
<dbReference type="PDB" id="6Z6J">
    <property type="method" value="EM"/>
    <property type="resolution" value="3.40 A"/>
    <property type="chains" value="SH=1-190"/>
</dbReference>
<dbReference type="PDB" id="6Z6K">
    <property type="method" value="EM"/>
    <property type="resolution" value="3.40 A"/>
    <property type="chains" value="SH=1-190"/>
</dbReference>
<dbReference type="PDB" id="6ZCE">
    <property type="method" value="EM"/>
    <property type="resolution" value="5.30 A"/>
    <property type="chains" value="I=1-190"/>
</dbReference>
<dbReference type="PDB" id="6ZQA">
    <property type="method" value="EM"/>
    <property type="resolution" value="4.40 A"/>
    <property type="chains" value="DH=1-190"/>
</dbReference>
<dbReference type="PDB" id="6ZQB">
    <property type="method" value="EM"/>
    <property type="resolution" value="3.90 A"/>
    <property type="chains" value="DH=1-190"/>
</dbReference>
<dbReference type="PDB" id="6ZQC">
    <property type="method" value="EM"/>
    <property type="resolution" value="3.80 A"/>
    <property type="chains" value="DH=1-190"/>
</dbReference>
<dbReference type="PDB" id="6ZQD">
    <property type="method" value="EM"/>
    <property type="resolution" value="3.80 A"/>
    <property type="chains" value="DH=1-190"/>
</dbReference>
<dbReference type="PDB" id="6ZQE">
    <property type="method" value="EM"/>
    <property type="resolution" value="7.10 A"/>
    <property type="chains" value="DH=1-190"/>
</dbReference>
<dbReference type="PDB" id="6ZQF">
    <property type="method" value="EM"/>
    <property type="resolution" value="4.90 A"/>
    <property type="chains" value="DH=1-190"/>
</dbReference>
<dbReference type="PDB" id="6ZQG">
    <property type="method" value="EM"/>
    <property type="resolution" value="3.50 A"/>
    <property type="chains" value="DH=1-190"/>
</dbReference>
<dbReference type="PDB" id="6ZU9">
    <property type="method" value="EM"/>
    <property type="resolution" value="6.20 A"/>
    <property type="chains" value="U=1-190"/>
</dbReference>
<dbReference type="PDB" id="6ZVI">
    <property type="method" value="EM"/>
    <property type="resolution" value="3.00 A"/>
    <property type="chains" value="p=3-187"/>
</dbReference>
<dbReference type="PDB" id="7A1G">
    <property type="method" value="EM"/>
    <property type="resolution" value="3.00 A"/>
    <property type="chains" value="U=4-187"/>
</dbReference>
<dbReference type="PDB" id="7AJT">
    <property type="method" value="EM"/>
    <property type="resolution" value="4.60 A"/>
    <property type="chains" value="DH=1-190"/>
</dbReference>
<dbReference type="PDB" id="7AJU">
    <property type="method" value="EM"/>
    <property type="resolution" value="3.80 A"/>
    <property type="chains" value="DH=1-190"/>
</dbReference>
<dbReference type="PDB" id="7B7D">
    <property type="method" value="EM"/>
    <property type="resolution" value="3.30 A"/>
    <property type="chains" value="U=4-187"/>
</dbReference>
<dbReference type="PDB" id="7D4I">
    <property type="method" value="EM"/>
    <property type="resolution" value="4.00 A"/>
    <property type="chains" value="SI=1-190"/>
</dbReference>
<dbReference type="PDB" id="7D5T">
    <property type="method" value="EM"/>
    <property type="resolution" value="6.00 A"/>
    <property type="chains" value="SI=1-190"/>
</dbReference>
<dbReference type="PDB" id="7D63">
    <property type="method" value="EM"/>
    <property type="resolution" value="12.30 A"/>
    <property type="chains" value="SI=1-190"/>
</dbReference>
<dbReference type="PDB" id="7MPI">
    <property type="method" value="EM"/>
    <property type="resolution" value="3.05 A"/>
    <property type="chains" value="BH=4-187"/>
</dbReference>
<dbReference type="PDB" id="7MPJ">
    <property type="method" value="EM"/>
    <property type="resolution" value="2.70 A"/>
    <property type="chains" value="BH=4-187"/>
</dbReference>
<dbReference type="PDB" id="7N8B">
    <property type="method" value="EM"/>
    <property type="resolution" value="3.05 A"/>
    <property type="chains" value="BH=4-187"/>
</dbReference>
<dbReference type="PDB" id="7NRC">
    <property type="method" value="EM"/>
    <property type="resolution" value="3.90 A"/>
    <property type="chains" value="SU=4-187"/>
</dbReference>
<dbReference type="PDB" id="7NRD">
    <property type="method" value="EM"/>
    <property type="resolution" value="4.36 A"/>
    <property type="chains" value="SU=3-187"/>
</dbReference>
<dbReference type="PDB" id="7SUK">
    <property type="method" value="EM"/>
    <property type="resolution" value="3.99 A"/>
    <property type="chains" value="L7=1-190"/>
</dbReference>
<dbReference type="PDB" id="7WTL">
    <property type="method" value="EM"/>
    <property type="resolution" value="3.30 A"/>
    <property type="chains" value="SH=1-190"/>
</dbReference>
<dbReference type="PDB" id="7WTM">
    <property type="method" value="EM"/>
    <property type="resolution" value="3.50 A"/>
    <property type="chains" value="SH=1-190"/>
</dbReference>
<dbReference type="PDB" id="7WTN">
    <property type="method" value="EM"/>
    <property type="resolution" value="3.40 A"/>
    <property type="chains" value="SH=1-190"/>
</dbReference>
<dbReference type="PDB" id="7WTO">
    <property type="method" value="EM"/>
    <property type="resolution" value="3.50 A"/>
    <property type="chains" value="SH=1-190"/>
</dbReference>
<dbReference type="PDB" id="7WTP">
    <property type="method" value="EM"/>
    <property type="resolution" value="3.80 A"/>
    <property type="chains" value="SH=1-190"/>
</dbReference>
<dbReference type="PDB" id="7WTQ">
    <property type="method" value="EM"/>
    <property type="resolution" value="3.70 A"/>
    <property type="chains" value="SH=1-190"/>
</dbReference>
<dbReference type="PDB" id="7WTR">
    <property type="method" value="EM"/>
    <property type="resolution" value="3.50 A"/>
    <property type="chains" value="SH=1-190"/>
</dbReference>
<dbReference type="PDB" id="7ZPQ">
    <property type="method" value="EM"/>
    <property type="resolution" value="3.47 A"/>
    <property type="chains" value="AH=4-187"/>
</dbReference>
<dbReference type="PDB" id="7ZRS">
    <property type="method" value="EM"/>
    <property type="resolution" value="4.80 A"/>
    <property type="chains" value="AH=4-187"/>
</dbReference>
<dbReference type="PDB" id="7ZUW">
    <property type="method" value="EM"/>
    <property type="resolution" value="4.30 A"/>
    <property type="chains" value="AH=4-187"/>
</dbReference>
<dbReference type="PDB" id="7ZUX">
    <property type="method" value="EM"/>
    <property type="resolution" value="2.50 A"/>
    <property type="chains" value="DH=4-187"/>
</dbReference>
<dbReference type="PDB" id="7ZW0">
    <property type="method" value="EM"/>
    <property type="resolution" value="2.40 A"/>
    <property type="chains" value="sU=1-190"/>
</dbReference>
<dbReference type="PDB" id="8BN3">
    <property type="method" value="EM"/>
    <property type="resolution" value="2.40 A"/>
    <property type="chains" value="S7=4-187"/>
</dbReference>
<dbReference type="PDB" id="8BQD">
    <property type="method" value="EM"/>
    <property type="resolution" value="3.90 A"/>
    <property type="chains" value="U=4-187"/>
</dbReference>
<dbReference type="PDB" id="8BQX">
    <property type="method" value="EM"/>
    <property type="resolution" value="3.80 A"/>
    <property type="chains" value="U=4-187"/>
</dbReference>
<dbReference type="PDB" id="8C00">
    <property type="method" value="EM"/>
    <property type="resolution" value="2.90 A"/>
    <property type="chains" value="U=1-190"/>
</dbReference>
<dbReference type="PDB" id="8C01">
    <property type="method" value="EM"/>
    <property type="resolution" value="2.70 A"/>
    <property type="chains" value="U=1-190"/>
</dbReference>
<dbReference type="PDB" id="8C83">
    <property type="method" value="EM"/>
    <property type="resolution" value="3.00 A"/>
    <property type="chains" value="U=1-190"/>
</dbReference>
<dbReference type="PDB" id="8CAH">
    <property type="method" value="EM"/>
    <property type="resolution" value="3.00 A"/>
    <property type="chains" value="U=1-190"/>
</dbReference>
<dbReference type="PDB" id="8CAS">
    <property type="method" value="EM"/>
    <property type="resolution" value="3.30 A"/>
    <property type="chains" value="U=1-190"/>
</dbReference>
<dbReference type="PDB" id="8CBJ">
    <property type="method" value="EM"/>
    <property type="resolution" value="3.80 A"/>
    <property type="chains" value="H=1-190"/>
</dbReference>
<dbReference type="PDB" id="8CCS">
    <property type="method" value="EM"/>
    <property type="resolution" value="1.97 A"/>
    <property type="chains" value="k=1-190"/>
</dbReference>
<dbReference type="PDB" id="8CDL">
    <property type="method" value="EM"/>
    <property type="resolution" value="2.72 A"/>
    <property type="chains" value="k=1-190"/>
</dbReference>
<dbReference type="PDB" id="8CDR">
    <property type="method" value="EM"/>
    <property type="resolution" value="2.04 A"/>
    <property type="chains" value="k=1-190"/>
</dbReference>
<dbReference type="PDB" id="8CEH">
    <property type="method" value="EM"/>
    <property type="resolution" value="2.05 A"/>
    <property type="chains" value="k=1-190"/>
</dbReference>
<dbReference type="PDB" id="8CF5">
    <property type="method" value="EM"/>
    <property type="resolution" value="2.71 A"/>
    <property type="chains" value="k=1-190"/>
</dbReference>
<dbReference type="PDB" id="8CG8">
    <property type="method" value="EM"/>
    <property type="resolution" value="2.57 A"/>
    <property type="chains" value="k=1-190"/>
</dbReference>
<dbReference type="PDB" id="8CGN">
    <property type="method" value="EM"/>
    <property type="resolution" value="2.28 A"/>
    <property type="chains" value="k=1-190"/>
</dbReference>
<dbReference type="PDB" id="8CIV">
    <property type="method" value="EM"/>
    <property type="resolution" value="2.47 A"/>
    <property type="chains" value="k=1-190"/>
</dbReference>
<dbReference type="PDB" id="8CKU">
    <property type="method" value="EM"/>
    <property type="resolution" value="3.11 A"/>
    <property type="chains" value="k=1-190"/>
</dbReference>
<dbReference type="PDB" id="8CMJ">
    <property type="method" value="EM"/>
    <property type="resolution" value="3.79 A"/>
    <property type="chains" value="k=1-190"/>
</dbReference>
<dbReference type="PDB" id="8EUB">
    <property type="method" value="EM"/>
    <property type="resolution" value="2.52 A"/>
    <property type="chains" value="BH=1-190"/>
</dbReference>
<dbReference type="PDB" id="8EVP">
    <property type="method" value="EM"/>
    <property type="resolution" value="2.38 A"/>
    <property type="chains" value="BH=1-190"/>
</dbReference>
<dbReference type="PDB" id="8EVQ">
    <property type="method" value="EM"/>
    <property type="resolution" value="2.72 A"/>
    <property type="chains" value="BH=1-190"/>
</dbReference>
<dbReference type="PDB" id="8EVR">
    <property type="method" value="EM"/>
    <property type="resolution" value="2.87 A"/>
    <property type="chains" value="BH=1-190"/>
</dbReference>
<dbReference type="PDB" id="8EVS">
    <property type="method" value="EM"/>
    <property type="resolution" value="2.62 A"/>
    <property type="chains" value="BH=1-190"/>
</dbReference>
<dbReference type="PDB" id="8EVT">
    <property type="method" value="EM"/>
    <property type="resolution" value="2.20 A"/>
    <property type="chains" value="BH=1-190"/>
</dbReference>
<dbReference type="PDB" id="8EWB">
    <property type="method" value="EM"/>
    <property type="resolution" value="2.87 A"/>
    <property type="chains" value="BH=1-190"/>
</dbReference>
<dbReference type="PDB" id="8EWC">
    <property type="method" value="EM"/>
    <property type="resolution" value="2.45 A"/>
    <property type="chains" value="BH=1-190"/>
</dbReference>
<dbReference type="PDB" id="8K2D">
    <property type="method" value="EM"/>
    <property type="resolution" value="3.20 A"/>
    <property type="chains" value="SH=1-190"/>
</dbReference>
<dbReference type="PDB" id="8K82">
    <property type="method" value="EM"/>
    <property type="resolution" value="3.00 A"/>
    <property type="chains" value="SH=1-190"/>
</dbReference>
<dbReference type="PDB" id="8P4V">
    <property type="method" value="X-ray"/>
    <property type="resolution" value="3.16 A"/>
    <property type="chains" value="I/s7=1-190"/>
</dbReference>
<dbReference type="PDB" id="8P9A">
    <property type="method" value="X-ray"/>
    <property type="resolution" value="2.90 A"/>
    <property type="chains" value="I/s7=1-190"/>
</dbReference>
<dbReference type="PDB" id="8T2X">
    <property type="method" value="EM"/>
    <property type="resolution" value="2.46 A"/>
    <property type="chains" value="BH=1-190"/>
</dbReference>
<dbReference type="PDB" id="8T2Y">
    <property type="method" value="EM"/>
    <property type="resolution" value="2.20 A"/>
    <property type="chains" value="BH=1-190"/>
</dbReference>
<dbReference type="PDB" id="8T2Z">
    <property type="method" value="EM"/>
    <property type="resolution" value="2.40 A"/>
    <property type="chains" value="BH=1-190"/>
</dbReference>
<dbReference type="PDB" id="8T30">
    <property type="method" value="EM"/>
    <property type="resolution" value="2.88 A"/>
    <property type="chains" value="BH=1-190"/>
</dbReference>
<dbReference type="PDB" id="8T3A">
    <property type="method" value="EM"/>
    <property type="resolution" value="2.86 A"/>
    <property type="chains" value="BH=1-190"/>
</dbReference>
<dbReference type="PDB" id="8T3B">
    <property type="method" value="EM"/>
    <property type="resolution" value="3.08 A"/>
    <property type="chains" value="BH=1-190"/>
</dbReference>
<dbReference type="PDB" id="8T3C">
    <property type="method" value="EM"/>
    <property type="resolution" value="3.86 A"/>
    <property type="chains" value="BH=1-190"/>
</dbReference>
<dbReference type="PDB" id="8T3D">
    <property type="method" value="EM"/>
    <property type="resolution" value="2.95 A"/>
    <property type="chains" value="BH=1-190"/>
</dbReference>
<dbReference type="PDB" id="8T3E">
    <property type="method" value="EM"/>
    <property type="resolution" value="3.04 A"/>
    <property type="chains" value="BH=1-190"/>
</dbReference>
<dbReference type="PDB" id="8T3F">
    <property type="method" value="EM"/>
    <property type="resolution" value="3.09 A"/>
    <property type="chains" value="BH=1-190"/>
</dbReference>
<dbReference type="PDB" id="8UT0">
    <property type="method" value="EM"/>
    <property type="resolution" value="3.22 A"/>
    <property type="chains" value="SU=4-187"/>
</dbReference>
<dbReference type="PDB" id="8UTI">
    <property type="method" value="EM"/>
    <property type="resolution" value="3.13 A"/>
    <property type="chains" value="SU=4-187"/>
</dbReference>
<dbReference type="PDB" id="8XU8">
    <property type="method" value="EM"/>
    <property type="resolution" value="3.40 A"/>
    <property type="chains" value="SU=4-187"/>
</dbReference>
<dbReference type="PDB" id="8Y0U">
    <property type="method" value="EM"/>
    <property type="resolution" value="3.59 A"/>
    <property type="chains" value="SH=1-190"/>
</dbReference>
<dbReference type="PDB" id="8YLD">
    <property type="method" value="EM"/>
    <property type="resolution" value="3.90 A"/>
    <property type="chains" value="SU=4-187"/>
</dbReference>
<dbReference type="PDB" id="8YLR">
    <property type="method" value="EM"/>
    <property type="resolution" value="3.90 A"/>
    <property type="chains" value="SU=4-187"/>
</dbReference>
<dbReference type="PDB" id="8Z70">
    <property type="method" value="EM"/>
    <property type="resolution" value="3.20 A"/>
    <property type="chains" value="SU=4-187"/>
</dbReference>
<dbReference type="PDB" id="8Z71">
    <property type="method" value="EM"/>
    <property type="resolution" value="3.60 A"/>
    <property type="chains" value="SU=4-187"/>
</dbReference>
<dbReference type="PDB" id="9F9S">
    <property type="method" value="EM"/>
    <property type="resolution" value="2.90 A"/>
    <property type="chains" value="Rh/Sh=1-190"/>
</dbReference>
<dbReference type="PDBsum" id="3J6X"/>
<dbReference type="PDBsum" id="3J6Y"/>
<dbReference type="PDBsum" id="3J77"/>
<dbReference type="PDBsum" id="3J78"/>
<dbReference type="PDBsum" id="4U3M"/>
<dbReference type="PDBsum" id="4U3N"/>
<dbReference type="PDBsum" id="4U3U"/>
<dbReference type="PDBsum" id="4U4N"/>
<dbReference type="PDBsum" id="4U4O"/>
<dbReference type="PDBsum" id="4U4Q"/>
<dbReference type="PDBsum" id="4U4R"/>
<dbReference type="PDBsum" id="4U4U"/>
<dbReference type="PDBsum" id="4U4Y"/>
<dbReference type="PDBsum" id="4U4Z"/>
<dbReference type="PDBsum" id="4U50"/>
<dbReference type="PDBsum" id="4U51"/>
<dbReference type="PDBsum" id="4U52"/>
<dbReference type="PDBsum" id="4U53"/>
<dbReference type="PDBsum" id="4U55"/>
<dbReference type="PDBsum" id="4U56"/>
<dbReference type="PDBsum" id="4U6F"/>
<dbReference type="PDBsum" id="4V88"/>
<dbReference type="PDBsum" id="4V8Y"/>
<dbReference type="PDBsum" id="4V8Z"/>
<dbReference type="PDBsum" id="4V92"/>
<dbReference type="PDBsum" id="5DAT"/>
<dbReference type="PDBsum" id="5DC3"/>
<dbReference type="PDBsum" id="5DGE"/>
<dbReference type="PDBsum" id="5DGF"/>
<dbReference type="PDBsum" id="5DGV"/>
<dbReference type="PDBsum" id="5FCI"/>
<dbReference type="PDBsum" id="5FCJ"/>
<dbReference type="PDBsum" id="5I4L"/>
<dbReference type="PDBsum" id="5JUO"/>
<dbReference type="PDBsum" id="5JUP"/>
<dbReference type="PDBsum" id="5JUS"/>
<dbReference type="PDBsum" id="5JUT"/>
<dbReference type="PDBsum" id="5JUU"/>
<dbReference type="PDBsum" id="5LL6"/>
<dbReference type="PDBsum" id="5LYB"/>
<dbReference type="PDBsum" id="5M1J"/>
<dbReference type="PDBsum" id="5MC6"/>
<dbReference type="PDBsum" id="5MEI"/>
<dbReference type="PDBsum" id="5NDG"/>
<dbReference type="PDBsum" id="5NDV"/>
<dbReference type="PDBsum" id="5NDW"/>
<dbReference type="PDBsum" id="5OBM"/>
<dbReference type="PDBsum" id="5ON6"/>
<dbReference type="PDBsum" id="5TBW"/>
<dbReference type="PDBsum" id="5TGA"/>
<dbReference type="PDBsum" id="5TGM"/>
<dbReference type="PDBsum" id="5TZS"/>
<dbReference type="PDBsum" id="5WLC"/>
<dbReference type="PDBsum" id="5WYJ"/>
<dbReference type="PDBsum" id="5WYK"/>
<dbReference type="PDBsum" id="6EML"/>
<dbReference type="PDBsum" id="6FAI"/>
<dbReference type="PDBsum" id="6GQ1"/>
<dbReference type="PDBsum" id="6GQB"/>
<dbReference type="PDBsum" id="6GQV"/>
<dbReference type="PDBsum" id="6HHQ"/>
<dbReference type="PDBsum" id="6I7O"/>
<dbReference type="PDBsum" id="6KE6"/>
<dbReference type="PDBsum" id="6LQP"/>
<dbReference type="PDBsum" id="6LQQ"/>
<dbReference type="PDBsum" id="6LQR"/>
<dbReference type="PDBsum" id="6LQS"/>
<dbReference type="PDBsum" id="6LQT"/>
<dbReference type="PDBsum" id="6LQU"/>
<dbReference type="PDBsum" id="6Q8Y"/>
<dbReference type="PDBsum" id="6RBD"/>
<dbReference type="PDBsum" id="6RBE"/>
<dbReference type="PDBsum" id="6S47"/>
<dbReference type="PDBsum" id="6SNT"/>
<dbReference type="PDBsum" id="6SV4"/>
<dbReference type="PDBsum" id="6T4Q"/>
<dbReference type="PDBsum" id="6T7I"/>
<dbReference type="PDBsum" id="6T7T"/>
<dbReference type="PDBsum" id="6T83"/>
<dbReference type="PDBsum" id="6TB3"/>
<dbReference type="PDBsum" id="6TNU"/>
<dbReference type="PDBsum" id="6WDR"/>
<dbReference type="PDBsum" id="6WOO"/>
<dbReference type="PDBsum" id="6XIQ"/>
<dbReference type="PDBsum" id="6XIR"/>
<dbReference type="PDBsum" id="6Y7C"/>
<dbReference type="PDBsum" id="6Z6J"/>
<dbReference type="PDBsum" id="6Z6K"/>
<dbReference type="PDBsum" id="6ZCE"/>
<dbReference type="PDBsum" id="6ZQA"/>
<dbReference type="PDBsum" id="6ZQB"/>
<dbReference type="PDBsum" id="6ZQC"/>
<dbReference type="PDBsum" id="6ZQD"/>
<dbReference type="PDBsum" id="6ZQE"/>
<dbReference type="PDBsum" id="6ZQF"/>
<dbReference type="PDBsum" id="6ZQG"/>
<dbReference type="PDBsum" id="6ZU9"/>
<dbReference type="PDBsum" id="6ZVI"/>
<dbReference type="PDBsum" id="7A1G"/>
<dbReference type="PDBsum" id="7AJT"/>
<dbReference type="PDBsum" id="7AJU"/>
<dbReference type="PDBsum" id="7B7D"/>
<dbReference type="PDBsum" id="7D4I"/>
<dbReference type="PDBsum" id="7D5T"/>
<dbReference type="PDBsum" id="7D63"/>
<dbReference type="PDBsum" id="7MPI"/>
<dbReference type="PDBsum" id="7MPJ"/>
<dbReference type="PDBsum" id="7N8B"/>
<dbReference type="PDBsum" id="7NRC"/>
<dbReference type="PDBsum" id="7NRD"/>
<dbReference type="PDBsum" id="7SUK"/>
<dbReference type="PDBsum" id="7WTL"/>
<dbReference type="PDBsum" id="7WTM"/>
<dbReference type="PDBsum" id="7WTN"/>
<dbReference type="PDBsum" id="7WTO"/>
<dbReference type="PDBsum" id="7WTP"/>
<dbReference type="PDBsum" id="7WTQ"/>
<dbReference type="PDBsum" id="7WTR"/>
<dbReference type="PDBsum" id="7ZPQ"/>
<dbReference type="PDBsum" id="7ZRS"/>
<dbReference type="PDBsum" id="7ZUW"/>
<dbReference type="PDBsum" id="7ZUX"/>
<dbReference type="PDBsum" id="7ZW0"/>
<dbReference type="PDBsum" id="8BN3"/>
<dbReference type="PDBsum" id="8BQD"/>
<dbReference type="PDBsum" id="8BQX"/>
<dbReference type="PDBsum" id="8C00"/>
<dbReference type="PDBsum" id="8C01"/>
<dbReference type="PDBsum" id="8C83"/>
<dbReference type="PDBsum" id="8CAH"/>
<dbReference type="PDBsum" id="8CAS"/>
<dbReference type="PDBsum" id="8CBJ"/>
<dbReference type="PDBsum" id="8CCS"/>
<dbReference type="PDBsum" id="8CDL"/>
<dbReference type="PDBsum" id="8CDR"/>
<dbReference type="PDBsum" id="8CEH"/>
<dbReference type="PDBsum" id="8CF5"/>
<dbReference type="PDBsum" id="8CG8"/>
<dbReference type="PDBsum" id="8CGN"/>
<dbReference type="PDBsum" id="8CIV"/>
<dbReference type="PDBsum" id="8CKU"/>
<dbReference type="PDBsum" id="8CMJ"/>
<dbReference type="PDBsum" id="8EUB"/>
<dbReference type="PDBsum" id="8EVP"/>
<dbReference type="PDBsum" id="8EVQ"/>
<dbReference type="PDBsum" id="8EVR"/>
<dbReference type="PDBsum" id="8EVS"/>
<dbReference type="PDBsum" id="8EVT"/>
<dbReference type="PDBsum" id="8EWB"/>
<dbReference type="PDBsum" id="8EWC"/>
<dbReference type="PDBsum" id="8K2D"/>
<dbReference type="PDBsum" id="8K82"/>
<dbReference type="PDBsum" id="8P4V"/>
<dbReference type="PDBsum" id="8P9A"/>
<dbReference type="PDBsum" id="8T2X"/>
<dbReference type="PDBsum" id="8T2Y"/>
<dbReference type="PDBsum" id="8T2Z"/>
<dbReference type="PDBsum" id="8T30"/>
<dbReference type="PDBsum" id="8T3A"/>
<dbReference type="PDBsum" id="8T3B"/>
<dbReference type="PDBsum" id="8T3C"/>
<dbReference type="PDBsum" id="8T3D"/>
<dbReference type="PDBsum" id="8T3E"/>
<dbReference type="PDBsum" id="8T3F"/>
<dbReference type="PDBsum" id="8UT0"/>
<dbReference type="PDBsum" id="8UTI"/>
<dbReference type="PDBsum" id="8XU8"/>
<dbReference type="PDBsum" id="8Y0U"/>
<dbReference type="PDBsum" id="8YLD"/>
<dbReference type="PDBsum" id="8YLR"/>
<dbReference type="PDBsum" id="8Z70"/>
<dbReference type="PDBsum" id="8Z71"/>
<dbReference type="PDBsum" id="9F9S"/>
<dbReference type="EMDB" id="EMD-0949"/>
<dbReference type="EMDB" id="EMD-0950"/>
<dbReference type="EMDB" id="EMD-0951"/>
<dbReference type="EMDB" id="EMD-0952"/>
<dbReference type="EMDB" id="EMD-0953"/>
<dbReference type="EMDB" id="EMD-0954"/>
<dbReference type="EMDB" id="EMD-10315"/>
<dbReference type="EMDB" id="EMD-10377"/>
<dbReference type="EMDB" id="EMD-10396"/>
<dbReference type="EMDB" id="EMD-10397"/>
<dbReference type="EMDB" id="EMD-10398"/>
<dbReference type="EMDB" id="EMD-10431"/>
<dbReference type="EMDB" id="EMD-10537"/>
<dbReference type="EMDB" id="EMD-10713"/>
<dbReference type="EMDB" id="EMD-11096"/>
<dbReference type="EMDB" id="EMD-11097"/>
<dbReference type="EMDB" id="EMD-11357"/>
<dbReference type="EMDB" id="EMD-11358"/>
<dbReference type="EMDB" id="EMD-11359"/>
<dbReference type="EMDB" id="EMD-11360"/>
<dbReference type="EMDB" id="EMD-11361"/>
<dbReference type="EMDB" id="EMD-11362"/>
<dbReference type="EMDB" id="EMD-11363"/>
<dbReference type="EMDB" id="EMD-11439"/>
<dbReference type="EMDB" id="EMD-11457"/>
<dbReference type="EMDB" id="EMD-11608"/>
<dbReference type="EMDB" id="EMD-11807"/>
<dbReference type="EMDB" id="EMD-11808"/>
<dbReference type="EMDB" id="EMD-14861"/>
<dbReference type="EMDB" id="EMD-14921"/>
<dbReference type="EMDB" id="EMD-14978"/>
<dbReference type="EMDB" id="EMD-14979"/>
<dbReference type="EMDB" id="EMD-14990"/>
<dbReference type="EMDB" id="EMD-16127"/>
<dbReference type="EMDB" id="EMD-16182"/>
<dbReference type="EMDB" id="EMD-16347"/>
<dbReference type="EMDB" id="EMD-16349"/>
<dbReference type="EMDB" id="EMD-16470"/>
<dbReference type="EMDB" id="EMD-16525"/>
<dbReference type="EMDB" id="EMD-16533"/>
<dbReference type="EMDB" id="EMD-16541"/>
<dbReference type="EMDB" id="EMD-16563"/>
<dbReference type="EMDB" id="EMD-16591"/>
<dbReference type="EMDB" id="EMD-16594"/>
<dbReference type="EMDB" id="EMD-16609"/>
<dbReference type="EMDB" id="EMD-16616"/>
<dbReference type="EMDB" id="EMD-16634"/>
<dbReference type="EMDB" id="EMD-16648"/>
<dbReference type="EMDB" id="EMD-16684"/>
<dbReference type="EMDB" id="EMD-16702"/>
<dbReference type="EMDB" id="EMD-16729"/>
<dbReference type="EMDB" id="EMD-21644"/>
<dbReference type="EMDB" id="EMD-21859"/>
<dbReference type="EMDB" id="EMD-22196"/>
<dbReference type="EMDB" id="EMD-22198"/>
<dbReference type="EMDB" id="EMD-23934"/>
<dbReference type="EMDB" id="EMD-23935"/>
<dbReference type="EMDB" id="EMD-24235"/>
<dbReference type="EMDB" id="EMD-25441"/>
<dbReference type="EMDB" id="EMD-28610"/>
<dbReference type="EMDB" id="EMD-28632"/>
<dbReference type="EMDB" id="EMD-28633"/>
<dbReference type="EMDB" id="EMD-28634"/>
<dbReference type="EMDB" id="EMD-28635"/>
<dbReference type="EMDB" id="EMD-28636"/>
<dbReference type="EMDB" id="EMD-28642"/>
<dbReference type="EMDB" id="EMD-28643"/>
<dbReference type="EMDB" id="EMD-30574"/>
<dbReference type="EMDB" id="EMD-30585"/>
<dbReference type="EMDB" id="EMD-30588"/>
<dbReference type="EMDB" id="EMD-32790"/>
<dbReference type="EMDB" id="EMD-32791"/>
<dbReference type="EMDB" id="EMD-32792"/>
<dbReference type="EMDB" id="EMD-32793"/>
<dbReference type="EMDB" id="EMD-32794"/>
<dbReference type="EMDB" id="EMD-32795"/>
<dbReference type="EMDB" id="EMD-32796"/>
<dbReference type="EMDB" id="EMD-36839"/>
<dbReference type="EMDB" id="EMD-36945"/>
<dbReference type="EMDB" id="EMD-38660"/>
<dbReference type="EMDB" id="EMD-40990"/>
<dbReference type="EMDB" id="EMD-40991"/>
<dbReference type="EMDB" id="EMD-40992"/>
<dbReference type="EMDB" id="EMD-40993"/>
<dbReference type="EMDB" id="EMD-40997"/>
<dbReference type="EMDB" id="EMD-40998"/>
<dbReference type="EMDB" id="EMD-40999"/>
<dbReference type="EMDB" id="EMD-41000"/>
<dbReference type="EMDB" id="EMD-41001"/>
<dbReference type="EMDB" id="EMD-41002"/>
<dbReference type="EMDB" id="EMD-4140"/>
<dbReference type="EMDB" id="EMD-4214"/>
<dbReference type="EMDB" id="EMD-42525"/>
<dbReference type="EMDB" id="EMD-42540"/>
<dbReference type="EMDB" id="EMD-4427"/>
<dbReference type="EMDB" id="EMD-4474"/>
<dbReference type="EMDB" id="EMD-4792"/>
<dbReference type="EMDB" id="EMD-4793"/>
<dbReference type="EMDB" id="EMD-50259"/>
<dbReference type="EMDB" id="EMD-8473"/>
<dbReference type="EMDB" id="EMD-8859"/>
<dbReference type="EMDB" id="EMD-9964"/>
<dbReference type="SMR" id="P26786"/>
<dbReference type="BioGRID" id="34494">
    <property type="interactions" value="665"/>
</dbReference>
<dbReference type="ComplexPortal" id="CPX-1599">
    <property type="entry name" value="40S cytosolic small ribosomal subunit"/>
</dbReference>
<dbReference type="DIP" id="DIP-2592N"/>
<dbReference type="FunCoup" id="P26786">
    <property type="interactions" value="1403"/>
</dbReference>
<dbReference type="IntAct" id="P26786">
    <property type="interactions" value="128"/>
</dbReference>
<dbReference type="MINT" id="P26786"/>
<dbReference type="STRING" id="4932.YOR096W"/>
<dbReference type="iPTMnet" id="P26786"/>
<dbReference type="PaxDb" id="4932-YOR096W"/>
<dbReference type="PeptideAtlas" id="P26786"/>
<dbReference type="TopDownProteomics" id="P26786"/>
<dbReference type="EnsemblFungi" id="YOR096W_mRNA">
    <property type="protein sequence ID" value="YOR096W"/>
    <property type="gene ID" value="YOR096W"/>
</dbReference>
<dbReference type="GeneID" id="854263"/>
<dbReference type="KEGG" id="sce:YOR096W"/>
<dbReference type="AGR" id="SGD:S000005622"/>
<dbReference type="SGD" id="S000005622">
    <property type="gene designation" value="RPS7A"/>
</dbReference>
<dbReference type="VEuPathDB" id="FungiDB:YOR096W"/>
<dbReference type="eggNOG" id="KOG3320">
    <property type="taxonomic scope" value="Eukaryota"/>
</dbReference>
<dbReference type="GeneTree" id="ENSGT00390000014122"/>
<dbReference type="HOGENOM" id="CLU_088621_1_2_1"/>
<dbReference type="InParanoid" id="P26786"/>
<dbReference type="OMA" id="AAYHKVQ"/>
<dbReference type="OrthoDB" id="1724687at2759"/>
<dbReference type="BioCyc" id="YEAST:G3O-33629-MONOMER"/>
<dbReference type="Reactome" id="R-SCE-156827">
    <property type="pathway name" value="L13a-mediated translational silencing of Ceruloplasmin expression"/>
</dbReference>
<dbReference type="Reactome" id="R-SCE-1799339">
    <property type="pathway name" value="SRP-dependent cotranslational protein targeting to membrane"/>
</dbReference>
<dbReference type="Reactome" id="R-SCE-6791226">
    <property type="pathway name" value="Major pathway of rRNA processing in the nucleolus and cytosol"/>
</dbReference>
<dbReference type="Reactome" id="R-SCE-72649">
    <property type="pathway name" value="Translation initiation complex formation"/>
</dbReference>
<dbReference type="Reactome" id="R-SCE-72689">
    <property type="pathway name" value="Formation of a pool of free 40S subunits"/>
</dbReference>
<dbReference type="Reactome" id="R-SCE-72695">
    <property type="pathway name" value="Formation of the ternary complex, and subsequently, the 43S complex"/>
</dbReference>
<dbReference type="Reactome" id="R-SCE-72702">
    <property type="pathway name" value="Ribosomal scanning and start codon recognition"/>
</dbReference>
<dbReference type="Reactome" id="R-SCE-72706">
    <property type="pathway name" value="GTP hydrolysis and joining of the 60S ribosomal subunit"/>
</dbReference>
<dbReference type="Reactome" id="R-SCE-975956">
    <property type="pathway name" value="Nonsense Mediated Decay (NMD) independent of the Exon Junction Complex (EJC)"/>
</dbReference>
<dbReference type="Reactome" id="R-SCE-975957">
    <property type="pathway name" value="Nonsense Mediated Decay (NMD) enhanced by the Exon Junction Complex (EJC)"/>
</dbReference>
<dbReference type="BioGRID-ORCS" id="854263">
    <property type="hits" value="6 hits in 10 CRISPR screens"/>
</dbReference>
<dbReference type="PRO" id="PR:P26786"/>
<dbReference type="Proteomes" id="UP000002311">
    <property type="component" value="Chromosome XV"/>
</dbReference>
<dbReference type="RNAct" id="P26786">
    <property type="molecule type" value="protein"/>
</dbReference>
<dbReference type="GO" id="GO:0030686">
    <property type="term" value="C:90S preribosome"/>
    <property type="evidence" value="ECO:0007005"/>
    <property type="project" value="SGD"/>
</dbReference>
<dbReference type="GO" id="GO:0005829">
    <property type="term" value="C:cytosol"/>
    <property type="evidence" value="ECO:0000304"/>
    <property type="project" value="Reactome"/>
</dbReference>
<dbReference type="GO" id="GO:0022627">
    <property type="term" value="C:cytosolic small ribosomal subunit"/>
    <property type="evidence" value="ECO:0000318"/>
    <property type="project" value="GO_Central"/>
</dbReference>
<dbReference type="GO" id="GO:0005730">
    <property type="term" value="C:nucleolus"/>
    <property type="evidence" value="ECO:0007669"/>
    <property type="project" value="UniProtKB-SubCell"/>
</dbReference>
<dbReference type="GO" id="GO:0005654">
    <property type="term" value="C:nucleoplasm"/>
    <property type="evidence" value="ECO:0000304"/>
    <property type="project" value="Reactome"/>
</dbReference>
<dbReference type="GO" id="GO:0032040">
    <property type="term" value="C:small-subunit processome"/>
    <property type="evidence" value="ECO:0000314"/>
    <property type="project" value="SGD"/>
</dbReference>
<dbReference type="GO" id="GO:0003735">
    <property type="term" value="F:structural constituent of ribosome"/>
    <property type="evidence" value="ECO:0000303"/>
    <property type="project" value="SGD"/>
</dbReference>
<dbReference type="GO" id="GO:0002181">
    <property type="term" value="P:cytoplasmic translation"/>
    <property type="evidence" value="ECO:0000303"/>
    <property type="project" value="SGD"/>
</dbReference>
<dbReference type="GO" id="GO:0042274">
    <property type="term" value="P:ribosomal small subunit biogenesis"/>
    <property type="evidence" value="ECO:0000318"/>
    <property type="project" value="GO_Central"/>
</dbReference>
<dbReference type="GO" id="GO:0042254">
    <property type="term" value="P:ribosome biogenesis"/>
    <property type="evidence" value="ECO:0000316"/>
    <property type="project" value="SGD"/>
</dbReference>
<dbReference type="GO" id="GO:0006364">
    <property type="term" value="P:rRNA processing"/>
    <property type="evidence" value="ECO:0000318"/>
    <property type="project" value="GO_Central"/>
</dbReference>
<dbReference type="InterPro" id="IPR000554">
    <property type="entry name" value="Ribosomal_eS7"/>
</dbReference>
<dbReference type="InterPro" id="IPR047861">
    <property type="entry name" value="Ribosomal_eS7_CS"/>
</dbReference>
<dbReference type="PANTHER" id="PTHR11278">
    <property type="entry name" value="40S RIBOSOMAL PROTEIN S7"/>
    <property type="match status" value="1"/>
</dbReference>
<dbReference type="PANTHER" id="PTHR11278:SF0">
    <property type="entry name" value="SMALL RIBOSOMAL SUBUNIT PROTEIN ES7"/>
    <property type="match status" value="1"/>
</dbReference>
<dbReference type="Pfam" id="PF01251">
    <property type="entry name" value="Ribosomal_S7e"/>
    <property type="match status" value="1"/>
</dbReference>
<dbReference type="PROSITE" id="PS00948">
    <property type="entry name" value="RIBOSOMAL_S7E"/>
    <property type="match status" value="1"/>
</dbReference>
<reference key="1">
    <citation type="journal article" date="1997" name="Yeast">
        <title>DNA sequencing and analysis of 130 kb from yeast chromosome XV.</title>
        <authorList>
            <person name="Voss H."/>
            <person name="Benes V."/>
            <person name="Andrade M.A."/>
            <person name="Valencia A."/>
            <person name="Rechmann S."/>
            <person name="Teodoru C."/>
            <person name="Schwager C."/>
            <person name="Paces V."/>
            <person name="Sander C."/>
            <person name="Ansorge W."/>
        </authorList>
    </citation>
    <scope>NUCLEOTIDE SEQUENCE [GENOMIC DNA]</scope>
</reference>
<reference key="2">
    <citation type="journal article" date="1997" name="Nature">
        <title>The nucleotide sequence of Saccharomyces cerevisiae chromosome XV.</title>
        <authorList>
            <person name="Dujon B."/>
            <person name="Albermann K."/>
            <person name="Aldea M."/>
            <person name="Alexandraki D."/>
            <person name="Ansorge W."/>
            <person name="Arino J."/>
            <person name="Benes V."/>
            <person name="Bohn C."/>
            <person name="Bolotin-Fukuhara M."/>
            <person name="Bordonne R."/>
            <person name="Boyer J."/>
            <person name="Camasses A."/>
            <person name="Casamayor A."/>
            <person name="Casas C."/>
            <person name="Cheret G."/>
            <person name="Cziepluch C."/>
            <person name="Daignan-Fornier B."/>
            <person name="Dang V.-D."/>
            <person name="de Haan M."/>
            <person name="Delius H."/>
            <person name="Durand P."/>
            <person name="Fairhead C."/>
            <person name="Feldmann H."/>
            <person name="Gaillon L."/>
            <person name="Galisson F."/>
            <person name="Gamo F.-J."/>
            <person name="Gancedo C."/>
            <person name="Goffeau A."/>
            <person name="Goulding S.E."/>
            <person name="Grivell L.A."/>
            <person name="Habbig B."/>
            <person name="Hand N.J."/>
            <person name="Hani J."/>
            <person name="Hattenhorst U."/>
            <person name="Hebling U."/>
            <person name="Hernando Y."/>
            <person name="Herrero E."/>
            <person name="Heumann K."/>
            <person name="Hiesel R."/>
            <person name="Hilger F."/>
            <person name="Hofmann B."/>
            <person name="Hollenberg C.P."/>
            <person name="Hughes B."/>
            <person name="Jauniaux J.-C."/>
            <person name="Kalogeropoulos A."/>
            <person name="Katsoulou C."/>
            <person name="Kordes E."/>
            <person name="Lafuente M.J."/>
            <person name="Landt O."/>
            <person name="Louis E.J."/>
            <person name="Maarse A.C."/>
            <person name="Madania A."/>
            <person name="Mannhaupt G."/>
            <person name="Marck C."/>
            <person name="Martin R.P."/>
            <person name="Mewes H.-W."/>
            <person name="Michaux G."/>
            <person name="Paces V."/>
            <person name="Parle-McDermott A.G."/>
            <person name="Pearson B.M."/>
            <person name="Perrin A."/>
            <person name="Pettersson B."/>
            <person name="Poch O."/>
            <person name="Pohl T.M."/>
            <person name="Poirey R."/>
            <person name="Portetelle D."/>
            <person name="Pujol A."/>
            <person name="Purnelle B."/>
            <person name="Ramezani Rad M."/>
            <person name="Rechmann S."/>
            <person name="Schwager C."/>
            <person name="Schweizer M."/>
            <person name="Sor F."/>
            <person name="Sterky F."/>
            <person name="Tarassov I.A."/>
            <person name="Teodoru C."/>
            <person name="Tettelin H."/>
            <person name="Thierry A."/>
            <person name="Tobiasch E."/>
            <person name="Tzermia M."/>
            <person name="Uhlen M."/>
            <person name="Unseld M."/>
            <person name="Valens M."/>
            <person name="Vandenbol M."/>
            <person name="Vetter I."/>
            <person name="Vlcek C."/>
            <person name="Voet M."/>
            <person name="Volckaert G."/>
            <person name="Voss H."/>
            <person name="Wambutt R."/>
            <person name="Wedler H."/>
            <person name="Wiemann S."/>
            <person name="Winsor B."/>
            <person name="Wolfe K.H."/>
            <person name="Zollner A."/>
            <person name="Zumstein E."/>
            <person name="Kleine K."/>
        </authorList>
    </citation>
    <scope>NUCLEOTIDE SEQUENCE [LARGE SCALE GENOMIC DNA]</scope>
    <source>
        <strain>ATCC 204508 / S288c</strain>
    </source>
</reference>
<reference key="3">
    <citation type="journal article" date="2014" name="G3 (Bethesda)">
        <title>The reference genome sequence of Saccharomyces cerevisiae: Then and now.</title>
        <authorList>
            <person name="Engel S.R."/>
            <person name="Dietrich F.S."/>
            <person name="Fisk D.G."/>
            <person name="Binkley G."/>
            <person name="Balakrishnan R."/>
            <person name="Costanzo M.C."/>
            <person name="Dwight S.S."/>
            <person name="Hitz B.C."/>
            <person name="Karra K."/>
            <person name="Nash R.S."/>
            <person name="Weng S."/>
            <person name="Wong E.D."/>
            <person name="Lloyd P."/>
            <person name="Skrzypek M.S."/>
            <person name="Miyasato S.R."/>
            <person name="Simison M."/>
            <person name="Cherry J.M."/>
        </authorList>
    </citation>
    <scope>GENOME REANNOTATION</scope>
    <source>
        <strain>ATCC 204508 / S288c</strain>
    </source>
</reference>
<reference key="4">
    <citation type="journal article" date="1992" name="J. Biol. Chem.">
        <title>NH2-terminal acetylation of ribosomal proteins of Saccharomyces cerevisiae.</title>
        <authorList>
            <person name="Takakura H."/>
            <person name="Tsunasawa S."/>
            <person name="Miyagi M."/>
            <person name="Warner J.R."/>
        </authorList>
    </citation>
    <scope>PROTEIN SEQUENCE OF 2-26</scope>
    <scope>ACETYLATION AT SER-2 BY NATA</scope>
</reference>
<reference key="5">
    <citation type="journal article" date="1998" name="Yeast">
        <title>The list of cytoplasmic ribosomal proteins of Saccharomyces cerevisiae.</title>
        <authorList>
            <person name="Planta R.J."/>
            <person name="Mager W.H."/>
        </authorList>
    </citation>
    <scope>NOMENCLATURE</scope>
    <scope>SUBUNIT</scope>
</reference>
<reference key="6">
    <citation type="journal article" date="1999" name="J. Biol. Chem.">
        <title>The action of N-terminal acetyltransferases on yeast ribosomal proteins.</title>
        <authorList>
            <person name="Arnold R.J."/>
            <person name="Polevoda B."/>
            <person name="Reilly J.P."/>
            <person name="Sherman F."/>
        </authorList>
    </citation>
    <scope>CLEAVAGE OF INITIATOR METHIONINE</scope>
    <scope>ACETYLATION AT SER-2 BY NATA</scope>
</reference>
<reference key="7">
    <citation type="journal article" date="2003" name="Nature">
        <title>Global analysis of protein localization in budding yeast.</title>
        <authorList>
            <person name="Huh W.-K."/>
            <person name="Falvo J.V."/>
            <person name="Gerke L.C."/>
            <person name="Carroll A.S."/>
            <person name="Howson R.W."/>
            <person name="Weissman J.S."/>
            <person name="O'Shea E.K."/>
        </authorList>
    </citation>
    <scope>SUBCELLULAR LOCATION [LARGE SCALE ANALYSIS]</scope>
</reference>
<reference key="8">
    <citation type="journal article" date="2003" name="Nature">
        <title>Global analysis of protein expression in yeast.</title>
        <authorList>
            <person name="Ghaemmaghami S."/>
            <person name="Huh W.-K."/>
            <person name="Bower K."/>
            <person name="Howson R.W."/>
            <person name="Belle A."/>
            <person name="Dephoure N."/>
            <person name="O'Shea E.K."/>
            <person name="Weissman J.S."/>
        </authorList>
    </citation>
    <scope>LEVEL OF PROTEIN EXPRESSION [LARGE SCALE ANALYSIS]</scope>
</reference>
<reference key="9">
    <citation type="journal article" date="2004" name="Eukaryot. Cell">
        <title>The small-subunit processome is a ribosome assembly intermediate.</title>
        <authorList>
            <person name="Bernstein K.A."/>
            <person name="Gallagher J.E.G."/>
            <person name="Mitchell B.M."/>
            <person name="Granneman S."/>
            <person name="Baserga S.J."/>
        </authorList>
    </citation>
    <scope>FUNCTION</scope>
    <scope>INTERACTION WITH MPP10 AND SNORNA U3</scope>
    <scope>IDENTIFICATION IN SSU PROCESSOME</scope>
    <scope>SUBCELLULAR LOCATION</scope>
</reference>
<reference key="10">
    <citation type="journal article" date="2008" name="Mol. Cell. Proteomics">
        <title>A multidimensional chromatography technology for in-depth phosphoproteome analysis.</title>
        <authorList>
            <person name="Albuquerque C.P."/>
            <person name="Smolka M.B."/>
            <person name="Payne S.H."/>
            <person name="Bafna V."/>
            <person name="Eng J."/>
            <person name="Zhou H."/>
        </authorList>
    </citation>
    <scope>IDENTIFICATION BY MASS SPECTROMETRY [LARGE SCALE ANALYSIS]</scope>
</reference>
<reference key="11">
    <citation type="journal article" date="2012" name="Proteomics">
        <title>Sites of ubiquitin attachment in Saccharomyces cerevisiae.</title>
        <authorList>
            <person name="Starita L.M."/>
            <person name="Lo R.S."/>
            <person name="Eng J.K."/>
            <person name="von Haller P.D."/>
            <person name="Fields S."/>
        </authorList>
    </citation>
    <scope>UBIQUITINATION [LARGE SCALE ANALYSIS] AT LYS-124</scope>
    <scope>IDENTIFICATION BY MASS SPECTROMETRY [LARGE SCALE ANALYSIS]</scope>
</reference>
<reference key="12">
    <citation type="journal article" date="2014" name="Curr. Opin. Struct. Biol.">
        <title>A new system for naming ribosomal proteins.</title>
        <authorList>
            <person name="Ban N."/>
            <person name="Beckmann R."/>
            <person name="Cate J.H.D."/>
            <person name="Dinman J.D."/>
            <person name="Dragon F."/>
            <person name="Ellis S.R."/>
            <person name="Lafontaine D.L.J."/>
            <person name="Lindahl L."/>
            <person name="Liljas A."/>
            <person name="Lipton J.M."/>
            <person name="McAlear M.A."/>
            <person name="Moore P.B."/>
            <person name="Noller H.F."/>
            <person name="Ortega J."/>
            <person name="Panse V.G."/>
            <person name="Ramakrishnan V."/>
            <person name="Spahn C.M.T."/>
            <person name="Steitz T.A."/>
            <person name="Tchorzewski M."/>
            <person name="Tollervey D."/>
            <person name="Warren A.J."/>
            <person name="Williamson J.R."/>
            <person name="Wilson D."/>
            <person name="Yonath A."/>
            <person name="Yusupov M."/>
        </authorList>
    </citation>
    <scope>NOMENCLATURE</scope>
</reference>
<reference key="13">
    <citation type="journal article" date="2019" name="EMBO J.">
        <title>Collided ribosomes form a unique structural interface to induce Hel2-driven quality control pathways.</title>
        <authorList>
            <person name="Ikeuchi K."/>
            <person name="Tesina P."/>
            <person name="Matsuo Y."/>
            <person name="Sugiyama T."/>
            <person name="Cheng J."/>
            <person name="Saeki Y."/>
            <person name="Tanaka K."/>
            <person name="Becker T."/>
            <person name="Beckmann R."/>
            <person name="Inada T."/>
        </authorList>
    </citation>
    <scope>UBIQUITINATION AT LYS-83 AND LYS-84</scope>
</reference>
<reference key="14">
    <citation type="journal article" date="2011" name="Science">
        <title>The structure of the eukaryotic ribosome at 3.0 A resolution.</title>
        <authorList>
            <person name="Ben-Shem A."/>
            <person name="Garreau de Loubresse N."/>
            <person name="Melnikov S."/>
            <person name="Jenner L."/>
            <person name="Yusupova G."/>
            <person name="Yusupov M."/>
        </authorList>
    </citation>
    <scope>X-RAY CRYSTALLOGRAPHY (3.00 ANGSTROMS) OF 80S RIBOSOME</scope>
    <scope>SUBUNIT</scope>
    <scope>SUBCELLULAR LOCATION</scope>
</reference>
<protein>
    <recommendedName>
        <fullName evidence="7">Small ribosomal subunit protein eS7A</fullName>
    </recommendedName>
    <alternativeName>
        <fullName evidence="8">40S ribosomal protein S7-A</fullName>
    </alternativeName>
    <alternativeName>
        <fullName>RP30</fullName>
    </alternativeName>
    <alternativeName>
        <fullName>RP40</fullName>
    </alternativeName>
</protein>
<proteinExistence type="evidence at protein level"/>
<gene>
    <name evidence="8" type="primary">RPS7A</name>
    <name type="synonym">RPS30</name>
    <name type="ordered locus">YOR096W</name>
    <name type="ORF">YOR3177W</name>
</gene>